<reference key="1">
    <citation type="journal article" date="1995" name="Ann. Mo. Bot. Gard.">
        <title>Subfamilial and tribal relationships in the Rubiaceae based on rbcL sequence data.</title>
        <authorList>
            <person name="Bremer B."/>
            <person name="Andreasen K."/>
            <person name="Olsson D."/>
        </authorList>
    </citation>
    <scope>NUCLEOTIDE SEQUENCE [GENOMIC DNA]</scope>
</reference>
<accession>Q31715</accession>
<name>RBL_BERBR</name>
<sequence>SVGFKAGVKEYKLTYYTPEYETKDTDILAAFRVTAQPGVPPEEAGAAVAAESSTGTWTAVWTDGLTSLDRYKGRCYHIEPVVGEEEQFIAYVAYPLDLFEEGSVTNMFTSIVGNVFGFKALRALRLEDLRIPTAYVKTFQGPPHGIQVERDKLNKYGRPLLGCTIKPKLGLSAKNYGRAVYECLRGGLDFTKDDENVNSQPFMRWRDRFCFCAEALYKAQAETGEIKGHYLNATAGTCEEMIKRAVFARELGVPIVMHDYLTGGFTANTTLAHYCRDNGLLLHIHRAMHAVIDRQKNHGMHFRVLAKALRMSGGDHVHAGTVVGKLEGERDITLGFVDLLRDDYIEKDRSRGVYFTQDWVSLPGVIPVASGGIHVWHMPALTEIFGDDAVLQFGGGTLGHPWGNPPGAVANRVALEACVKARNEGRDLATEGNEIIREACKWSPELAAACEVWKEIRFNFAAVDTLDPTA</sequence>
<feature type="chain" id="PRO_0000062374" description="Ribulose bisphosphate carboxylase large chain">
    <location>
        <begin position="1" status="less than"/>
        <end position="470"/>
    </location>
</feature>
<feature type="active site" description="Proton acceptor" evidence="1">
    <location>
        <position position="166"/>
    </location>
</feature>
<feature type="active site" description="Proton acceptor" evidence="1">
    <location>
        <position position="285"/>
    </location>
</feature>
<feature type="binding site" description="in homodimeric partner" evidence="1">
    <location>
        <position position="114"/>
    </location>
    <ligand>
        <name>substrate</name>
    </ligand>
</feature>
<feature type="binding site" evidence="1">
    <location>
        <position position="164"/>
    </location>
    <ligand>
        <name>substrate</name>
    </ligand>
</feature>
<feature type="binding site" evidence="1">
    <location>
        <position position="168"/>
    </location>
    <ligand>
        <name>substrate</name>
    </ligand>
</feature>
<feature type="binding site" description="via carbamate group" evidence="1">
    <location>
        <position position="192"/>
    </location>
    <ligand>
        <name>Mg(2+)</name>
        <dbReference type="ChEBI" id="CHEBI:18420"/>
    </ligand>
</feature>
<feature type="binding site" evidence="1">
    <location>
        <position position="194"/>
    </location>
    <ligand>
        <name>Mg(2+)</name>
        <dbReference type="ChEBI" id="CHEBI:18420"/>
    </ligand>
</feature>
<feature type="binding site" evidence="1">
    <location>
        <position position="195"/>
    </location>
    <ligand>
        <name>Mg(2+)</name>
        <dbReference type="ChEBI" id="CHEBI:18420"/>
    </ligand>
</feature>
<feature type="binding site" evidence="1">
    <location>
        <position position="286"/>
    </location>
    <ligand>
        <name>substrate</name>
    </ligand>
</feature>
<feature type="binding site" evidence="1">
    <location>
        <position position="318"/>
    </location>
    <ligand>
        <name>substrate</name>
    </ligand>
</feature>
<feature type="binding site" evidence="1">
    <location>
        <position position="370"/>
    </location>
    <ligand>
        <name>substrate</name>
    </ligand>
</feature>
<feature type="site" description="Transition state stabilizer" evidence="1">
    <location>
        <position position="325"/>
    </location>
</feature>
<feature type="modified residue" description="N6,N6,N6-trimethyllysine" evidence="1">
    <location>
        <position position="5"/>
    </location>
</feature>
<feature type="modified residue" description="N6-carboxylysine" evidence="1">
    <location>
        <position position="192"/>
    </location>
</feature>
<feature type="disulfide bond" description="Interchain; in linked form" evidence="1">
    <location>
        <position position="238"/>
    </location>
</feature>
<feature type="non-terminal residue">
    <location>
        <position position="1"/>
    </location>
</feature>
<protein>
    <recommendedName>
        <fullName evidence="1">Ribulose bisphosphate carboxylase large chain</fullName>
        <shortName evidence="1">RuBisCO large subunit</shortName>
        <ecNumber evidence="1">4.1.1.39</ecNumber>
    </recommendedName>
</protein>
<geneLocation type="chloroplast"/>
<keyword id="KW-0113">Calvin cycle</keyword>
<keyword id="KW-0120">Carbon dioxide fixation</keyword>
<keyword id="KW-0150">Chloroplast</keyword>
<keyword id="KW-1015">Disulfide bond</keyword>
<keyword id="KW-0456">Lyase</keyword>
<keyword id="KW-0460">Magnesium</keyword>
<keyword id="KW-0479">Metal-binding</keyword>
<keyword id="KW-0488">Methylation</keyword>
<keyword id="KW-0503">Monooxygenase</keyword>
<keyword id="KW-0560">Oxidoreductase</keyword>
<keyword id="KW-0601">Photorespiration</keyword>
<keyword id="KW-0602">Photosynthesis</keyword>
<keyword id="KW-0934">Plastid</keyword>
<organism>
    <name type="scientific">Bertiera breviflora</name>
    <dbReference type="NCBI Taxonomy" id="43448"/>
    <lineage>
        <taxon>Eukaryota</taxon>
        <taxon>Viridiplantae</taxon>
        <taxon>Streptophyta</taxon>
        <taxon>Embryophyta</taxon>
        <taxon>Tracheophyta</taxon>
        <taxon>Spermatophyta</taxon>
        <taxon>Magnoliopsida</taxon>
        <taxon>eudicotyledons</taxon>
        <taxon>Gunneridae</taxon>
        <taxon>Pentapetalae</taxon>
        <taxon>asterids</taxon>
        <taxon>lamiids</taxon>
        <taxon>Gentianales</taxon>
        <taxon>Rubiaceae</taxon>
        <taxon>Ixoroideae</taxon>
        <taxon>Gardenieae complex</taxon>
        <taxon>Bertiereae - Coffeeae clade</taxon>
        <taxon>Bertiereae</taxon>
        <taxon>Bertiera</taxon>
    </lineage>
</organism>
<evidence type="ECO:0000255" key="1">
    <source>
        <dbReference type="HAMAP-Rule" id="MF_01338"/>
    </source>
</evidence>
<proteinExistence type="inferred from homology"/>
<gene>
    <name evidence="1" type="primary">rbcL</name>
</gene>
<comment type="function">
    <text evidence="1">RuBisCO catalyzes two reactions: the carboxylation of D-ribulose 1,5-bisphosphate, the primary event in carbon dioxide fixation, as well as the oxidative fragmentation of the pentose substrate in the photorespiration process. Both reactions occur simultaneously and in competition at the same active site.</text>
</comment>
<comment type="catalytic activity">
    <reaction evidence="1">
        <text>2 (2R)-3-phosphoglycerate + 2 H(+) = D-ribulose 1,5-bisphosphate + CO2 + H2O</text>
        <dbReference type="Rhea" id="RHEA:23124"/>
        <dbReference type="ChEBI" id="CHEBI:15377"/>
        <dbReference type="ChEBI" id="CHEBI:15378"/>
        <dbReference type="ChEBI" id="CHEBI:16526"/>
        <dbReference type="ChEBI" id="CHEBI:57870"/>
        <dbReference type="ChEBI" id="CHEBI:58272"/>
        <dbReference type="EC" id="4.1.1.39"/>
    </reaction>
</comment>
<comment type="catalytic activity">
    <reaction evidence="1">
        <text>D-ribulose 1,5-bisphosphate + O2 = 2-phosphoglycolate + (2R)-3-phosphoglycerate + 2 H(+)</text>
        <dbReference type="Rhea" id="RHEA:36631"/>
        <dbReference type="ChEBI" id="CHEBI:15378"/>
        <dbReference type="ChEBI" id="CHEBI:15379"/>
        <dbReference type="ChEBI" id="CHEBI:57870"/>
        <dbReference type="ChEBI" id="CHEBI:58033"/>
        <dbReference type="ChEBI" id="CHEBI:58272"/>
    </reaction>
</comment>
<comment type="cofactor">
    <cofactor evidence="1">
        <name>Mg(2+)</name>
        <dbReference type="ChEBI" id="CHEBI:18420"/>
    </cofactor>
    <text evidence="1">Binds 1 Mg(2+) ion per subunit.</text>
</comment>
<comment type="subunit">
    <text evidence="1">Heterohexadecamer of 8 large chains and 8 small chains; disulfide-linked. The disulfide link is formed within the large subunit homodimers.</text>
</comment>
<comment type="subcellular location">
    <subcellularLocation>
        <location>Plastid</location>
        <location>Chloroplast</location>
    </subcellularLocation>
</comment>
<comment type="PTM">
    <text evidence="1">The disulfide bond which can form in the large chain dimeric partners within the hexadecamer appears to be associated with oxidative stress and protein turnover.</text>
</comment>
<comment type="miscellaneous">
    <text evidence="1">The basic functional RuBisCO is composed of a large chain homodimer in a 'head-to-tail' conformation. In form I RuBisCO this homodimer is arranged in a barrel-like tetramer with the small subunits forming a tetrameric 'cap' on each end of the 'barrel'.</text>
</comment>
<comment type="similarity">
    <text evidence="1">Belongs to the RuBisCO large chain family. Type I subfamily.</text>
</comment>
<dbReference type="EC" id="4.1.1.39" evidence="1"/>
<dbReference type="EMBL" id="X83625">
    <property type="protein sequence ID" value="CAA58604.1"/>
    <property type="molecule type" value="Genomic_DNA"/>
</dbReference>
<dbReference type="SMR" id="Q31715"/>
<dbReference type="GO" id="GO:0009507">
    <property type="term" value="C:chloroplast"/>
    <property type="evidence" value="ECO:0007669"/>
    <property type="project" value="UniProtKB-SubCell"/>
</dbReference>
<dbReference type="GO" id="GO:0000287">
    <property type="term" value="F:magnesium ion binding"/>
    <property type="evidence" value="ECO:0007669"/>
    <property type="project" value="InterPro"/>
</dbReference>
<dbReference type="GO" id="GO:0004497">
    <property type="term" value="F:monooxygenase activity"/>
    <property type="evidence" value="ECO:0007669"/>
    <property type="project" value="UniProtKB-KW"/>
</dbReference>
<dbReference type="GO" id="GO:0016984">
    <property type="term" value="F:ribulose-bisphosphate carboxylase activity"/>
    <property type="evidence" value="ECO:0007669"/>
    <property type="project" value="UniProtKB-EC"/>
</dbReference>
<dbReference type="GO" id="GO:0009853">
    <property type="term" value="P:photorespiration"/>
    <property type="evidence" value="ECO:0007669"/>
    <property type="project" value="UniProtKB-KW"/>
</dbReference>
<dbReference type="GO" id="GO:0019253">
    <property type="term" value="P:reductive pentose-phosphate cycle"/>
    <property type="evidence" value="ECO:0007669"/>
    <property type="project" value="UniProtKB-KW"/>
</dbReference>
<dbReference type="CDD" id="cd08212">
    <property type="entry name" value="RuBisCO_large_I"/>
    <property type="match status" value="1"/>
</dbReference>
<dbReference type="FunFam" id="3.20.20.110:FF:000001">
    <property type="entry name" value="Ribulose bisphosphate carboxylase large chain"/>
    <property type="match status" value="1"/>
</dbReference>
<dbReference type="FunFam" id="3.30.70.150:FF:000001">
    <property type="entry name" value="Ribulose bisphosphate carboxylase large chain"/>
    <property type="match status" value="1"/>
</dbReference>
<dbReference type="Gene3D" id="3.20.20.110">
    <property type="entry name" value="Ribulose bisphosphate carboxylase, large subunit, C-terminal domain"/>
    <property type="match status" value="1"/>
</dbReference>
<dbReference type="Gene3D" id="3.30.70.150">
    <property type="entry name" value="RuBisCO large subunit, N-terminal domain"/>
    <property type="match status" value="1"/>
</dbReference>
<dbReference type="HAMAP" id="MF_01338">
    <property type="entry name" value="RuBisCO_L_type1"/>
    <property type="match status" value="1"/>
</dbReference>
<dbReference type="InterPro" id="IPR033966">
    <property type="entry name" value="RuBisCO"/>
</dbReference>
<dbReference type="InterPro" id="IPR020878">
    <property type="entry name" value="RuBisCo_large_chain_AS"/>
</dbReference>
<dbReference type="InterPro" id="IPR000685">
    <property type="entry name" value="RuBisCO_lsu_C"/>
</dbReference>
<dbReference type="InterPro" id="IPR036376">
    <property type="entry name" value="RuBisCO_lsu_C_sf"/>
</dbReference>
<dbReference type="InterPro" id="IPR017443">
    <property type="entry name" value="RuBisCO_lsu_fd_N"/>
</dbReference>
<dbReference type="InterPro" id="IPR036422">
    <property type="entry name" value="RuBisCO_lsu_N_sf"/>
</dbReference>
<dbReference type="InterPro" id="IPR020888">
    <property type="entry name" value="RuBisCO_lsuI"/>
</dbReference>
<dbReference type="NCBIfam" id="NF003252">
    <property type="entry name" value="PRK04208.1"/>
    <property type="match status" value="1"/>
</dbReference>
<dbReference type="PANTHER" id="PTHR42704">
    <property type="entry name" value="RIBULOSE BISPHOSPHATE CARBOXYLASE"/>
    <property type="match status" value="1"/>
</dbReference>
<dbReference type="PANTHER" id="PTHR42704:SF15">
    <property type="entry name" value="RIBULOSE BISPHOSPHATE CARBOXYLASE LARGE CHAIN"/>
    <property type="match status" value="1"/>
</dbReference>
<dbReference type="Pfam" id="PF00016">
    <property type="entry name" value="RuBisCO_large"/>
    <property type="match status" value="1"/>
</dbReference>
<dbReference type="Pfam" id="PF02788">
    <property type="entry name" value="RuBisCO_large_N"/>
    <property type="match status" value="1"/>
</dbReference>
<dbReference type="SFLD" id="SFLDG01052">
    <property type="entry name" value="RuBisCO"/>
    <property type="match status" value="1"/>
</dbReference>
<dbReference type="SFLD" id="SFLDS00014">
    <property type="entry name" value="RuBisCO"/>
    <property type="match status" value="1"/>
</dbReference>
<dbReference type="SFLD" id="SFLDG00301">
    <property type="entry name" value="RuBisCO-like_proteins"/>
    <property type="match status" value="1"/>
</dbReference>
<dbReference type="SUPFAM" id="SSF51649">
    <property type="entry name" value="RuBisCo, C-terminal domain"/>
    <property type="match status" value="1"/>
</dbReference>
<dbReference type="SUPFAM" id="SSF54966">
    <property type="entry name" value="RuBisCO, large subunit, small (N-terminal) domain"/>
    <property type="match status" value="1"/>
</dbReference>
<dbReference type="PROSITE" id="PS00157">
    <property type="entry name" value="RUBISCO_LARGE"/>
    <property type="match status" value="1"/>
</dbReference>